<dbReference type="EC" id="1.6.5.-" evidence="1"/>
<dbReference type="EC" id="1.7.1.17" evidence="1"/>
<dbReference type="EMBL" id="AE017262">
    <property type="protein sequence ID" value="AAT03422.1"/>
    <property type="molecule type" value="Genomic_DNA"/>
</dbReference>
<dbReference type="RefSeq" id="WP_003724354.1">
    <property type="nucleotide sequence ID" value="NC_002973.6"/>
</dbReference>
<dbReference type="SMR" id="Q722T9"/>
<dbReference type="KEGG" id="lmf:LMOf2365_0640"/>
<dbReference type="HOGENOM" id="CLU_088964_3_0_9"/>
<dbReference type="GO" id="GO:0009055">
    <property type="term" value="F:electron transfer activity"/>
    <property type="evidence" value="ECO:0007669"/>
    <property type="project" value="UniProtKB-UniRule"/>
</dbReference>
<dbReference type="GO" id="GO:0010181">
    <property type="term" value="F:FMN binding"/>
    <property type="evidence" value="ECO:0007669"/>
    <property type="project" value="UniProtKB-UniRule"/>
</dbReference>
<dbReference type="GO" id="GO:0016652">
    <property type="term" value="F:oxidoreductase activity, acting on NAD(P)H as acceptor"/>
    <property type="evidence" value="ECO:0007669"/>
    <property type="project" value="UniProtKB-UniRule"/>
</dbReference>
<dbReference type="GO" id="GO:0016655">
    <property type="term" value="F:oxidoreductase activity, acting on NAD(P)H, quinone or similar compound as acceptor"/>
    <property type="evidence" value="ECO:0007669"/>
    <property type="project" value="InterPro"/>
</dbReference>
<dbReference type="Gene3D" id="3.40.50.360">
    <property type="match status" value="1"/>
</dbReference>
<dbReference type="HAMAP" id="MF_01216">
    <property type="entry name" value="Azoreductase_type1"/>
    <property type="match status" value="1"/>
</dbReference>
<dbReference type="InterPro" id="IPR003680">
    <property type="entry name" value="Flavodoxin_fold"/>
</dbReference>
<dbReference type="InterPro" id="IPR029039">
    <property type="entry name" value="Flavoprotein-like_sf"/>
</dbReference>
<dbReference type="InterPro" id="IPR050104">
    <property type="entry name" value="FMN-dep_NADH:Q_OxRdtase_AzoR1"/>
</dbReference>
<dbReference type="InterPro" id="IPR023048">
    <property type="entry name" value="NADH:quinone_OxRdtase_FMN_depd"/>
</dbReference>
<dbReference type="NCBIfam" id="NF010075">
    <property type="entry name" value="PRK13556.1"/>
    <property type="match status" value="1"/>
</dbReference>
<dbReference type="PANTHER" id="PTHR43741">
    <property type="entry name" value="FMN-DEPENDENT NADH-AZOREDUCTASE 1"/>
    <property type="match status" value="1"/>
</dbReference>
<dbReference type="PANTHER" id="PTHR43741:SF4">
    <property type="entry name" value="FMN-DEPENDENT NADH:QUINONE OXIDOREDUCTASE"/>
    <property type="match status" value="1"/>
</dbReference>
<dbReference type="Pfam" id="PF02525">
    <property type="entry name" value="Flavodoxin_2"/>
    <property type="match status" value="1"/>
</dbReference>
<dbReference type="SUPFAM" id="SSF52218">
    <property type="entry name" value="Flavoproteins"/>
    <property type="match status" value="1"/>
</dbReference>
<comment type="function">
    <text evidence="1">Quinone reductase that provides resistance to thiol-specific stress caused by electrophilic quinones.</text>
</comment>
<comment type="function">
    <text evidence="1">Also exhibits azoreductase activity. Catalyzes the reductive cleavage of the azo bond in aromatic azo compounds to the corresponding amines.</text>
</comment>
<comment type="catalytic activity">
    <reaction evidence="1">
        <text>2 a quinone + NADH + H(+) = 2 a 1,4-benzosemiquinone + NAD(+)</text>
        <dbReference type="Rhea" id="RHEA:65952"/>
        <dbReference type="ChEBI" id="CHEBI:15378"/>
        <dbReference type="ChEBI" id="CHEBI:57540"/>
        <dbReference type="ChEBI" id="CHEBI:57945"/>
        <dbReference type="ChEBI" id="CHEBI:132124"/>
        <dbReference type="ChEBI" id="CHEBI:134225"/>
    </reaction>
</comment>
<comment type="catalytic activity">
    <reaction evidence="1">
        <text>N,N-dimethyl-1,4-phenylenediamine + anthranilate + 2 NAD(+) = 2-(4-dimethylaminophenyl)diazenylbenzoate + 2 NADH + 2 H(+)</text>
        <dbReference type="Rhea" id="RHEA:55872"/>
        <dbReference type="ChEBI" id="CHEBI:15378"/>
        <dbReference type="ChEBI" id="CHEBI:15783"/>
        <dbReference type="ChEBI" id="CHEBI:16567"/>
        <dbReference type="ChEBI" id="CHEBI:57540"/>
        <dbReference type="ChEBI" id="CHEBI:57945"/>
        <dbReference type="ChEBI" id="CHEBI:71579"/>
        <dbReference type="EC" id="1.7.1.17"/>
    </reaction>
</comment>
<comment type="cofactor">
    <cofactor evidence="1">
        <name>FMN</name>
        <dbReference type="ChEBI" id="CHEBI:58210"/>
    </cofactor>
    <text evidence="1">Binds 1 FMN per subunit.</text>
</comment>
<comment type="subunit">
    <text evidence="1">Homodimer.</text>
</comment>
<comment type="similarity">
    <text evidence="1">Belongs to the azoreductase type 1 family.</text>
</comment>
<keyword id="KW-0285">Flavoprotein</keyword>
<keyword id="KW-0288">FMN</keyword>
<keyword id="KW-0520">NAD</keyword>
<keyword id="KW-0560">Oxidoreductase</keyword>
<proteinExistence type="inferred from homology"/>
<accession>Q722T9</accession>
<sequence>MTNVLFIKANGLPAERSVSVALYEIFLTEYKKSHPDDNVTELDLFEADLPYYDVTMMSGLHKEAAGETLSPEEKRLADIANSYLDQFLAADKIVMAFPLWNFSIPAQFLTYLFYLNQAGKTFKYTANGPVGLVADKKIALLNARGGIYSDGPMQSFEMSLSYVKNVLAHFGISEPEMVIVEGHNAKPDQAKDIISAGAKEAVELAKIF</sequence>
<name>AZOR1_LISMF</name>
<organism>
    <name type="scientific">Listeria monocytogenes serotype 4b (strain F2365)</name>
    <dbReference type="NCBI Taxonomy" id="265669"/>
    <lineage>
        <taxon>Bacteria</taxon>
        <taxon>Bacillati</taxon>
        <taxon>Bacillota</taxon>
        <taxon>Bacilli</taxon>
        <taxon>Bacillales</taxon>
        <taxon>Listeriaceae</taxon>
        <taxon>Listeria</taxon>
    </lineage>
</organism>
<feature type="chain" id="PRO_0000166340" description="FMN-dependent NADH:quinone oxidoreductase 1">
    <location>
        <begin position="1"/>
        <end position="208"/>
    </location>
</feature>
<feature type="binding site" evidence="1">
    <location>
        <begin position="17"/>
        <end position="19"/>
    </location>
    <ligand>
        <name>FMN</name>
        <dbReference type="ChEBI" id="CHEBI:58210"/>
    </ligand>
</feature>
<evidence type="ECO:0000255" key="1">
    <source>
        <dbReference type="HAMAP-Rule" id="MF_01216"/>
    </source>
</evidence>
<reference key="1">
    <citation type="journal article" date="2004" name="Nucleic Acids Res.">
        <title>Whole genome comparisons of serotype 4b and 1/2a strains of the food-borne pathogen Listeria monocytogenes reveal new insights into the core genome components of this species.</title>
        <authorList>
            <person name="Nelson K.E."/>
            <person name="Fouts D.E."/>
            <person name="Mongodin E.F."/>
            <person name="Ravel J."/>
            <person name="DeBoy R.T."/>
            <person name="Kolonay J.F."/>
            <person name="Rasko D.A."/>
            <person name="Angiuoli S.V."/>
            <person name="Gill S.R."/>
            <person name="Paulsen I.T."/>
            <person name="Peterson J.D."/>
            <person name="White O."/>
            <person name="Nelson W.C."/>
            <person name="Nierman W.C."/>
            <person name="Beanan M.J."/>
            <person name="Brinkac L.M."/>
            <person name="Daugherty S.C."/>
            <person name="Dodson R.J."/>
            <person name="Durkin A.S."/>
            <person name="Madupu R."/>
            <person name="Haft D.H."/>
            <person name="Selengut J."/>
            <person name="Van Aken S.E."/>
            <person name="Khouri H.M."/>
            <person name="Fedorova N."/>
            <person name="Forberger H.A."/>
            <person name="Tran B."/>
            <person name="Kathariou S."/>
            <person name="Wonderling L.D."/>
            <person name="Uhlich G.A."/>
            <person name="Bayles D.O."/>
            <person name="Luchansky J.B."/>
            <person name="Fraser C.M."/>
        </authorList>
    </citation>
    <scope>NUCLEOTIDE SEQUENCE [LARGE SCALE GENOMIC DNA]</scope>
    <source>
        <strain>F2365</strain>
    </source>
</reference>
<protein>
    <recommendedName>
        <fullName evidence="1">FMN-dependent NADH:quinone oxidoreductase 1</fullName>
        <ecNumber evidence="1">1.6.5.-</ecNumber>
    </recommendedName>
    <alternativeName>
        <fullName evidence="1">Azo-dye reductase 1</fullName>
    </alternativeName>
    <alternativeName>
        <fullName evidence="1">FMN-dependent NADH-azo compound oxidoreductase 1</fullName>
    </alternativeName>
    <alternativeName>
        <fullName evidence="1">FMN-dependent NADH-azoreductase 1</fullName>
        <ecNumber evidence="1">1.7.1.17</ecNumber>
    </alternativeName>
</protein>
<gene>
    <name evidence="1" type="primary">azoR1</name>
    <name type="ordered locus">LMOf2365_0640</name>
</gene>